<feature type="chain" id="PRO_1000128139" description="Small ribosomal subunit protein uS9">
    <location>
        <begin position="1"/>
        <end position="161"/>
    </location>
</feature>
<feature type="region of interest" description="Disordered" evidence="2">
    <location>
        <begin position="1"/>
        <end position="25"/>
    </location>
</feature>
<feature type="compositionally biased region" description="Polar residues" evidence="2">
    <location>
        <begin position="1"/>
        <end position="21"/>
    </location>
</feature>
<sequence length="161" mass="18020">MATLQSLADLNRANTQTSNPENEAPVHVQKLDAQGRAYATGKRKDAVARVWIKPGNGTVVVNGRAVETYFARPVLRMILRQPLEIVGRVDQYDITVTVKGGGLSGQAGAVRHGLSKALTYYEPELRSPLKREGFLTRDPRVVERKKYGRKKARRSFQFSKR</sequence>
<organism>
    <name type="scientific">Methylorubrum populi (strain ATCC BAA-705 / NCIMB 13946 / BJ001)</name>
    <name type="common">Methylobacterium populi</name>
    <dbReference type="NCBI Taxonomy" id="441620"/>
    <lineage>
        <taxon>Bacteria</taxon>
        <taxon>Pseudomonadati</taxon>
        <taxon>Pseudomonadota</taxon>
        <taxon>Alphaproteobacteria</taxon>
        <taxon>Hyphomicrobiales</taxon>
        <taxon>Methylobacteriaceae</taxon>
        <taxon>Methylorubrum</taxon>
    </lineage>
</organism>
<protein>
    <recommendedName>
        <fullName evidence="1">Small ribosomal subunit protein uS9</fullName>
    </recommendedName>
    <alternativeName>
        <fullName evidence="3">30S ribosomal protein S9</fullName>
    </alternativeName>
</protein>
<proteinExistence type="inferred from homology"/>
<gene>
    <name evidence="1" type="primary">rpsI</name>
    <name type="ordered locus">Mpop_2650</name>
</gene>
<keyword id="KW-0687">Ribonucleoprotein</keyword>
<keyword id="KW-0689">Ribosomal protein</keyword>
<accession>B1ZCB4</accession>
<evidence type="ECO:0000255" key="1">
    <source>
        <dbReference type="HAMAP-Rule" id="MF_00532"/>
    </source>
</evidence>
<evidence type="ECO:0000256" key="2">
    <source>
        <dbReference type="SAM" id="MobiDB-lite"/>
    </source>
</evidence>
<evidence type="ECO:0000305" key="3"/>
<name>RS9_METPB</name>
<reference key="1">
    <citation type="submission" date="2008-04" db="EMBL/GenBank/DDBJ databases">
        <title>Complete sequence of chromosome of Methylobacterium populi BJ001.</title>
        <authorList>
            <consortium name="US DOE Joint Genome Institute"/>
            <person name="Copeland A."/>
            <person name="Lucas S."/>
            <person name="Lapidus A."/>
            <person name="Glavina del Rio T."/>
            <person name="Dalin E."/>
            <person name="Tice H."/>
            <person name="Bruce D."/>
            <person name="Goodwin L."/>
            <person name="Pitluck S."/>
            <person name="Chertkov O."/>
            <person name="Brettin T."/>
            <person name="Detter J.C."/>
            <person name="Han C."/>
            <person name="Kuske C.R."/>
            <person name="Schmutz J."/>
            <person name="Larimer F."/>
            <person name="Land M."/>
            <person name="Hauser L."/>
            <person name="Kyrpides N."/>
            <person name="Mikhailova N."/>
            <person name="Marx C."/>
            <person name="Richardson P."/>
        </authorList>
    </citation>
    <scope>NUCLEOTIDE SEQUENCE [LARGE SCALE GENOMIC DNA]</scope>
    <source>
        <strain>ATCC BAA-705 / NCIMB 13946 / BJ001</strain>
    </source>
</reference>
<comment type="similarity">
    <text evidence="1">Belongs to the universal ribosomal protein uS9 family.</text>
</comment>
<dbReference type="EMBL" id="CP001029">
    <property type="protein sequence ID" value="ACB80807.1"/>
    <property type="molecule type" value="Genomic_DNA"/>
</dbReference>
<dbReference type="RefSeq" id="WP_012454529.1">
    <property type="nucleotide sequence ID" value="NC_010725.1"/>
</dbReference>
<dbReference type="SMR" id="B1ZCB4"/>
<dbReference type="STRING" id="441620.Mpop_2650"/>
<dbReference type="KEGG" id="mpo:Mpop_2650"/>
<dbReference type="eggNOG" id="COG0103">
    <property type="taxonomic scope" value="Bacteria"/>
</dbReference>
<dbReference type="HOGENOM" id="CLU_046483_2_0_5"/>
<dbReference type="OrthoDB" id="9803965at2"/>
<dbReference type="Proteomes" id="UP000007136">
    <property type="component" value="Chromosome"/>
</dbReference>
<dbReference type="GO" id="GO:0022627">
    <property type="term" value="C:cytosolic small ribosomal subunit"/>
    <property type="evidence" value="ECO:0007669"/>
    <property type="project" value="TreeGrafter"/>
</dbReference>
<dbReference type="GO" id="GO:0003723">
    <property type="term" value="F:RNA binding"/>
    <property type="evidence" value="ECO:0007669"/>
    <property type="project" value="TreeGrafter"/>
</dbReference>
<dbReference type="GO" id="GO:0003735">
    <property type="term" value="F:structural constituent of ribosome"/>
    <property type="evidence" value="ECO:0007669"/>
    <property type="project" value="InterPro"/>
</dbReference>
<dbReference type="GO" id="GO:0006412">
    <property type="term" value="P:translation"/>
    <property type="evidence" value="ECO:0007669"/>
    <property type="project" value="UniProtKB-UniRule"/>
</dbReference>
<dbReference type="FunFam" id="3.30.230.10:FF:000001">
    <property type="entry name" value="30S ribosomal protein S9"/>
    <property type="match status" value="1"/>
</dbReference>
<dbReference type="Gene3D" id="3.30.230.10">
    <property type="match status" value="1"/>
</dbReference>
<dbReference type="HAMAP" id="MF_00532_B">
    <property type="entry name" value="Ribosomal_uS9_B"/>
    <property type="match status" value="1"/>
</dbReference>
<dbReference type="InterPro" id="IPR020568">
    <property type="entry name" value="Ribosomal_Su5_D2-typ_SF"/>
</dbReference>
<dbReference type="InterPro" id="IPR000754">
    <property type="entry name" value="Ribosomal_uS9"/>
</dbReference>
<dbReference type="InterPro" id="IPR023035">
    <property type="entry name" value="Ribosomal_uS9_bac/plastid"/>
</dbReference>
<dbReference type="InterPro" id="IPR020574">
    <property type="entry name" value="Ribosomal_uS9_CS"/>
</dbReference>
<dbReference type="InterPro" id="IPR014721">
    <property type="entry name" value="Ribsml_uS5_D2-typ_fold_subgr"/>
</dbReference>
<dbReference type="NCBIfam" id="NF001099">
    <property type="entry name" value="PRK00132.1"/>
    <property type="match status" value="1"/>
</dbReference>
<dbReference type="PANTHER" id="PTHR21569">
    <property type="entry name" value="RIBOSOMAL PROTEIN S9"/>
    <property type="match status" value="1"/>
</dbReference>
<dbReference type="PANTHER" id="PTHR21569:SF1">
    <property type="entry name" value="SMALL RIBOSOMAL SUBUNIT PROTEIN US9M"/>
    <property type="match status" value="1"/>
</dbReference>
<dbReference type="Pfam" id="PF00380">
    <property type="entry name" value="Ribosomal_S9"/>
    <property type="match status" value="1"/>
</dbReference>
<dbReference type="SUPFAM" id="SSF54211">
    <property type="entry name" value="Ribosomal protein S5 domain 2-like"/>
    <property type="match status" value="1"/>
</dbReference>
<dbReference type="PROSITE" id="PS00360">
    <property type="entry name" value="RIBOSOMAL_S9"/>
    <property type="match status" value="1"/>
</dbReference>